<sequence length="264" mass="27743">MIEVSGVSVRLSGKTIISDVAFTARAGELTAIAGPNGSGKTTTMKAISGELAYGGSVRIGGGEVKGLKPWQLAAIRGVLPQASTISFPFTVREIVRMGLTSGLNLHPDKAEQTAAAALASVDLTGFEGRFYQELSGGEQQRVQLARVLCQIAEPIVDGKPCWLLLDEPVSSLDISHQLTIMTLARNFCERGGGVIAVMHDLNLTALFADRIVLMKSGRLAAAGSIGEVLTNETMLAVFGCALRINQVPSDGTPFVLAHSAISRP</sequence>
<name>HMUV_RHIJ3</name>
<feature type="chain" id="PRO_0000269616" description="Hemin import ATP-binding protein HmuV">
    <location>
        <begin position="1"/>
        <end position="264"/>
    </location>
</feature>
<feature type="domain" description="ABC transporter" evidence="1">
    <location>
        <begin position="2"/>
        <end position="241"/>
    </location>
</feature>
<feature type="binding site" evidence="1">
    <location>
        <begin position="34"/>
        <end position="41"/>
    </location>
    <ligand>
        <name>ATP</name>
        <dbReference type="ChEBI" id="CHEBI:30616"/>
    </ligand>
</feature>
<dbReference type="EC" id="7.6.2.-" evidence="1"/>
<dbReference type="EMBL" id="AM236080">
    <property type="protein sequence ID" value="CAK09189.1"/>
    <property type="status" value="ALT_INIT"/>
    <property type="molecule type" value="Genomic_DNA"/>
</dbReference>
<dbReference type="RefSeq" id="WP_041936599.1">
    <property type="nucleotide sequence ID" value="NC_008380.1"/>
</dbReference>
<dbReference type="SMR" id="Q1MCZ1"/>
<dbReference type="EnsemblBacteria" id="CAK09189">
    <property type="protein sequence ID" value="CAK09189"/>
    <property type="gene ID" value="RL3700"/>
</dbReference>
<dbReference type="KEGG" id="rle:RL3700"/>
<dbReference type="eggNOG" id="COG4559">
    <property type="taxonomic scope" value="Bacteria"/>
</dbReference>
<dbReference type="HOGENOM" id="CLU_000604_1_11_5"/>
<dbReference type="Proteomes" id="UP000006575">
    <property type="component" value="Chromosome"/>
</dbReference>
<dbReference type="GO" id="GO:0005886">
    <property type="term" value="C:plasma membrane"/>
    <property type="evidence" value="ECO:0007669"/>
    <property type="project" value="UniProtKB-SubCell"/>
</dbReference>
<dbReference type="GO" id="GO:0005524">
    <property type="term" value="F:ATP binding"/>
    <property type="evidence" value="ECO:0007669"/>
    <property type="project" value="UniProtKB-KW"/>
</dbReference>
<dbReference type="GO" id="GO:0016887">
    <property type="term" value="F:ATP hydrolysis activity"/>
    <property type="evidence" value="ECO:0007669"/>
    <property type="project" value="InterPro"/>
</dbReference>
<dbReference type="CDD" id="cd03214">
    <property type="entry name" value="ABC_Iron-Siderophores_B12_Hemin"/>
    <property type="match status" value="1"/>
</dbReference>
<dbReference type="Gene3D" id="3.40.50.300">
    <property type="entry name" value="P-loop containing nucleotide triphosphate hydrolases"/>
    <property type="match status" value="1"/>
</dbReference>
<dbReference type="InterPro" id="IPR003593">
    <property type="entry name" value="AAA+_ATPase"/>
</dbReference>
<dbReference type="InterPro" id="IPR003439">
    <property type="entry name" value="ABC_transporter-like_ATP-bd"/>
</dbReference>
<dbReference type="InterPro" id="IPR017871">
    <property type="entry name" value="ABC_transporter-like_CS"/>
</dbReference>
<dbReference type="InterPro" id="IPR027417">
    <property type="entry name" value="P-loop_NTPase"/>
</dbReference>
<dbReference type="NCBIfam" id="NF010068">
    <property type="entry name" value="PRK13548.1"/>
    <property type="match status" value="1"/>
</dbReference>
<dbReference type="PANTHER" id="PTHR42794">
    <property type="entry name" value="HEMIN IMPORT ATP-BINDING PROTEIN HMUV"/>
    <property type="match status" value="1"/>
</dbReference>
<dbReference type="PANTHER" id="PTHR42794:SF1">
    <property type="entry name" value="HEMIN IMPORT ATP-BINDING PROTEIN HMUV"/>
    <property type="match status" value="1"/>
</dbReference>
<dbReference type="Pfam" id="PF00005">
    <property type="entry name" value="ABC_tran"/>
    <property type="match status" value="1"/>
</dbReference>
<dbReference type="SMART" id="SM00382">
    <property type="entry name" value="AAA"/>
    <property type="match status" value="1"/>
</dbReference>
<dbReference type="SUPFAM" id="SSF52540">
    <property type="entry name" value="P-loop containing nucleoside triphosphate hydrolases"/>
    <property type="match status" value="1"/>
</dbReference>
<dbReference type="PROSITE" id="PS00211">
    <property type="entry name" value="ABC_TRANSPORTER_1"/>
    <property type="match status" value="1"/>
</dbReference>
<dbReference type="PROSITE" id="PS50893">
    <property type="entry name" value="ABC_TRANSPORTER_2"/>
    <property type="match status" value="1"/>
</dbReference>
<dbReference type="PROSITE" id="PS51261">
    <property type="entry name" value="HMUV"/>
    <property type="match status" value="1"/>
</dbReference>
<evidence type="ECO:0000255" key="1">
    <source>
        <dbReference type="HAMAP-Rule" id="MF_01718"/>
    </source>
</evidence>
<evidence type="ECO:0000305" key="2"/>
<gene>
    <name evidence="1" type="primary">hmuV</name>
    <name type="ordered locus">RL3700</name>
</gene>
<comment type="function">
    <text evidence="1">Part of the ABC transporter complex HmuTUV involved in hemin import. Responsible for energy coupling to the transport system.</text>
</comment>
<comment type="subunit">
    <text evidence="1">The complex is composed of two ATP-binding proteins (HmuV), two transmembrane proteins (HmuU) and a solute-binding protein (HmuT).</text>
</comment>
<comment type="subcellular location">
    <subcellularLocation>
        <location evidence="1">Cell inner membrane</location>
        <topology evidence="1">Peripheral membrane protein</topology>
    </subcellularLocation>
</comment>
<comment type="similarity">
    <text evidence="1">Belongs to the ABC transporter superfamily. Heme (hemin) importer (TC 3.A.1.14.5) family.</text>
</comment>
<comment type="sequence caution" evidence="2">
    <conflict type="erroneous initiation">
        <sequence resource="EMBL-CDS" id="CAK09189"/>
    </conflict>
</comment>
<protein>
    <recommendedName>
        <fullName evidence="1">Hemin import ATP-binding protein HmuV</fullName>
        <ecNumber evidence="1">7.6.2.-</ecNumber>
    </recommendedName>
</protein>
<proteinExistence type="inferred from homology"/>
<keyword id="KW-0067">ATP-binding</keyword>
<keyword id="KW-0997">Cell inner membrane</keyword>
<keyword id="KW-1003">Cell membrane</keyword>
<keyword id="KW-0472">Membrane</keyword>
<keyword id="KW-0547">Nucleotide-binding</keyword>
<keyword id="KW-1278">Translocase</keyword>
<keyword id="KW-0813">Transport</keyword>
<organism>
    <name type="scientific">Rhizobium johnstonii (strain DSM 114642 / LMG 32736 / 3841)</name>
    <name type="common">Rhizobium leguminosarum bv. viciae</name>
    <dbReference type="NCBI Taxonomy" id="216596"/>
    <lineage>
        <taxon>Bacteria</taxon>
        <taxon>Pseudomonadati</taxon>
        <taxon>Pseudomonadota</taxon>
        <taxon>Alphaproteobacteria</taxon>
        <taxon>Hyphomicrobiales</taxon>
        <taxon>Rhizobiaceae</taxon>
        <taxon>Rhizobium/Agrobacterium group</taxon>
        <taxon>Rhizobium</taxon>
        <taxon>Rhizobium johnstonii</taxon>
    </lineage>
</organism>
<accession>Q1MCZ1</accession>
<reference key="1">
    <citation type="journal article" date="2006" name="Genome Biol.">
        <title>The genome of Rhizobium leguminosarum has recognizable core and accessory components.</title>
        <authorList>
            <person name="Young J.P.W."/>
            <person name="Crossman L.C."/>
            <person name="Johnston A.W.B."/>
            <person name="Thomson N.R."/>
            <person name="Ghazoui Z.F."/>
            <person name="Hull K.H."/>
            <person name="Wexler M."/>
            <person name="Curson A.R.J."/>
            <person name="Todd J.D."/>
            <person name="Poole P.S."/>
            <person name="Mauchline T.H."/>
            <person name="East A.K."/>
            <person name="Quail M.A."/>
            <person name="Churcher C."/>
            <person name="Arrowsmith C."/>
            <person name="Cherevach I."/>
            <person name="Chillingworth T."/>
            <person name="Clarke K."/>
            <person name="Cronin A."/>
            <person name="Davis P."/>
            <person name="Fraser A."/>
            <person name="Hance Z."/>
            <person name="Hauser H."/>
            <person name="Jagels K."/>
            <person name="Moule S."/>
            <person name="Mungall K."/>
            <person name="Norbertczak H."/>
            <person name="Rabbinowitsch E."/>
            <person name="Sanders M."/>
            <person name="Simmonds M."/>
            <person name="Whitehead S."/>
            <person name="Parkhill J."/>
        </authorList>
    </citation>
    <scope>NUCLEOTIDE SEQUENCE [LARGE SCALE GENOMIC DNA]</scope>
    <source>
        <strain>DSM 114642 / LMG 32736 / 3841</strain>
    </source>
</reference>